<organism>
    <name type="scientific">Arabidopsis thaliana</name>
    <name type="common">Mouse-ear cress</name>
    <dbReference type="NCBI Taxonomy" id="3702"/>
    <lineage>
        <taxon>Eukaryota</taxon>
        <taxon>Viridiplantae</taxon>
        <taxon>Streptophyta</taxon>
        <taxon>Embryophyta</taxon>
        <taxon>Tracheophyta</taxon>
        <taxon>Spermatophyta</taxon>
        <taxon>Magnoliopsida</taxon>
        <taxon>eudicotyledons</taxon>
        <taxon>Gunneridae</taxon>
        <taxon>Pentapetalae</taxon>
        <taxon>rosids</taxon>
        <taxon>malvids</taxon>
        <taxon>Brassicales</taxon>
        <taxon>Brassicaceae</taxon>
        <taxon>Camelineae</taxon>
        <taxon>Arabidopsis</taxon>
    </lineage>
</organism>
<keyword id="KW-0472">Membrane</keyword>
<keyword id="KW-1185">Reference proteome</keyword>
<keyword id="KW-0812">Transmembrane</keyword>
<keyword id="KW-1133">Transmembrane helix</keyword>
<keyword id="KW-0813">Transport</keyword>
<comment type="subcellular location">
    <subcellularLocation>
        <location evidence="1">Membrane</location>
        <topology evidence="1">Multi-pass membrane protein</topology>
    </subcellularLocation>
</comment>
<comment type="similarity">
    <text evidence="3">Belongs to the multi antimicrobial extrusion (MATE) (TC 2.A.66.1) family.</text>
</comment>
<comment type="sequence caution" evidence="3">
    <conflict type="erroneous gene model prediction">
        <sequence resource="EMBL-CDS" id="AAD28683"/>
    </conflict>
</comment>
<protein>
    <recommendedName>
        <fullName evidence="2">Protein DETOXIFICATION 5</fullName>
        <shortName evidence="2">AtDTX5</shortName>
    </recommendedName>
    <alternativeName>
        <fullName evidence="3">Multidrug and toxic compound extrusion protein 5</fullName>
        <shortName evidence="3">MATE protein 5</shortName>
    </alternativeName>
</protein>
<feature type="chain" id="PRO_0000405323" description="Protein DETOXIFICATION 5">
    <location>
        <begin position="1"/>
        <end position="477"/>
    </location>
</feature>
<feature type="transmembrane region" description="Helical" evidence="1">
    <location>
        <begin position="38"/>
        <end position="58"/>
    </location>
</feature>
<feature type="transmembrane region" description="Helical" evidence="1">
    <location>
        <begin position="72"/>
        <end position="92"/>
    </location>
</feature>
<feature type="transmembrane region" description="Helical" evidence="1">
    <location>
        <begin position="113"/>
        <end position="133"/>
    </location>
</feature>
<feature type="transmembrane region" description="Helical" evidence="1">
    <location>
        <begin position="146"/>
        <end position="166"/>
    </location>
</feature>
<feature type="transmembrane region" description="Helical" evidence="1">
    <location>
        <begin position="187"/>
        <end position="207"/>
    </location>
</feature>
<feature type="transmembrane region" description="Helical" evidence="1">
    <location>
        <begin position="211"/>
        <end position="231"/>
    </location>
</feature>
<feature type="transmembrane region" description="Helical" evidence="1">
    <location>
        <begin position="263"/>
        <end position="283"/>
    </location>
</feature>
<feature type="transmembrane region" description="Helical" evidence="1">
    <location>
        <begin position="292"/>
        <end position="312"/>
    </location>
</feature>
<feature type="transmembrane region" description="Helical" evidence="1">
    <location>
        <begin position="333"/>
        <end position="353"/>
    </location>
</feature>
<feature type="transmembrane region" description="Helical" evidence="1">
    <location>
        <begin position="376"/>
        <end position="396"/>
    </location>
</feature>
<feature type="transmembrane region" description="Helical" evidence="1">
    <location>
        <begin position="411"/>
        <end position="431"/>
    </location>
</feature>
<feature type="transmembrane region" description="Helical" evidence="1">
    <location>
        <begin position="436"/>
        <end position="456"/>
    </location>
</feature>
<reference key="1">
    <citation type="journal article" date="1999" name="Nature">
        <title>Sequence and analysis of chromosome 2 of the plant Arabidopsis thaliana.</title>
        <authorList>
            <person name="Lin X."/>
            <person name="Kaul S."/>
            <person name="Rounsley S.D."/>
            <person name="Shea T.P."/>
            <person name="Benito M.-I."/>
            <person name="Town C.D."/>
            <person name="Fujii C.Y."/>
            <person name="Mason T.M."/>
            <person name="Bowman C.L."/>
            <person name="Barnstead M.E."/>
            <person name="Feldblyum T.V."/>
            <person name="Buell C.R."/>
            <person name="Ketchum K.A."/>
            <person name="Lee J.J."/>
            <person name="Ronning C.M."/>
            <person name="Koo H.L."/>
            <person name="Moffat K.S."/>
            <person name="Cronin L.A."/>
            <person name="Shen M."/>
            <person name="Pai G."/>
            <person name="Van Aken S."/>
            <person name="Umayam L."/>
            <person name="Tallon L.J."/>
            <person name="Gill J.E."/>
            <person name="Adams M.D."/>
            <person name="Carrera A.J."/>
            <person name="Creasy T.H."/>
            <person name="Goodman H.M."/>
            <person name="Somerville C.R."/>
            <person name="Copenhaver G.P."/>
            <person name="Preuss D."/>
            <person name="Nierman W.C."/>
            <person name="White O."/>
            <person name="Eisen J.A."/>
            <person name="Salzberg S.L."/>
            <person name="Fraser C.M."/>
            <person name="Venter J.C."/>
        </authorList>
    </citation>
    <scope>NUCLEOTIDE SEQUENCE [LARGE SCALE GENOMIC DNA]</scope>
    <source>
        <strain>cv. Columbia</strain>
    </source>
</reference>
<reference key="2">
    <citation type="journal article" date="2017" name="Plant J.">
        <title>Araport11: a complete reannotation of the Arabidopsis thaliana reference genome.</title>
        <authorList>
            <person name="Cheng C.Y."/>
            <person name="Krishnakumar V."/>
            <person name="Chan A.P."/>
            <person name="Thibaud-Nissen F."/>
            <person name="Schobel S."/>
            <person name="Town C.D."/>
        </authorList>
    </citation>
    <scope>GENOME REANNOTATION</scope>
    <source>
        <strain>cv. Columbia</strain>
    </source>
</reference>
<reference key="3">
    <citation type="journal article" date="2002" name="J. Biol. Chem.">
        <title>Functional cloning and characterization of a plant efflux carrier for multidrug and heavy metal detoxification.</title>
        <authorList>
            <person name="Li L."/>
            <person name="He Z."/>
            <person name="Pandey G.K."/>
            <person name="Tsuchiya T."/>
            <person name="Luan S."/>
        </authorList>
    </citation>
    <scope>GENE FAMILY</scope>
    <scope>NOMENCLATURE</scope>
</reference>
<reference key="4">
    <citation type="journal article" date="2003" name="Eur. J. Biochem.">
        <title>The multidrug/oligosaccharidyl-lipid/polysaccharide (MOP) exporter superfamily.</title>
        <authorList>
            <person name="Hvorup R.N."/>
            <person name="Winnen B."/>
            <person name="Chang A.B."/>
            <person name="Jiang Y."/>
            <person name="Zhou X.F."/>
            <person name="Saier M.H. Jr."/>
        </authorList>
    </citation>
    <scope>GENE FAMILY</scope>
</reference>
<accession>Q9SIA1</accession>
<sequence length="477" mass="51306">MEDPLLLGDDQLITRNLKSTPTWWMNFTAELKNVSSMAAPMATVTVSQYLLPVISVMVAGHCGELQLSGVTLATAFANVSGFGIMYGLVGALETLCGQAYGAKQYTKIGTYTFSAIVSNVPIVVLISILWFYMDKLFVSLGQDPDISKVAGSYAVCLIPALLAQAVQQPLTRFLQTQGLVLPLLYCAITTLLFHIPVCLILVYAFGLGSNGAALAIGLSYWFNVLILALYVRFSSACEKTRGFVSDDFVLSVKQFFQYGIPSAAMTTIEWSLFELLILSSGLLPNPKLETSVLSICLTTSSLHCVIPMGIGAAGSTRISNELGAGNPEVARLAVFAGIFLWFLEATICSTLLFTCKNIFGYAFSNSKEVVDYVTELSSLLCLSFMVDGFSSVLDGVARGSGWQNIGAWANVVAYYLLGAPVGFFLGFWGHMNGKGLWIGVIVGSTAQGIILAIVTACLSWEEQAAKARERIVGRTLE</sequence>
<dbReference type="EMBL" id="AC007178">
    <property type="protein sequence ID" value="AAD28683.1"/>
    <property type="status" value="ALT_SEQ"/>
    <property type="molecule type" value="Genomic_DNA"/>
</dbReference>
<dbReference type="EMBL" id="CP002685">
    <property type="protein sequence ID" value="AEC05798.1"/>
    <property type="molecule type" value="Genomic_DNA"/>
</dbReference>
<dbReference type="PIR" id="E84454">
    <property type="entry name" value="E84454"/>
</dbReference>
<dbReference type="RefSeq" id="NP_178498.2">
    <property type="nucleotide sequence ID" value="NM_126450.3"/>
</dbReference>
<dbReference type="SMR" id="Q9SIA1"/>
<dbReference type="FunCoup" id="Q9SIA1">
    <property type="interactions" value="296"/>
</dbReference>
<dbReference type="STRING" id="3702.Q9SIA1"/>
<dbReference type="PaxDb" id="3702-AT2G04090.1"/>
<dbReference type="ProteomicsDB" id="224287"/>
<dbReference type="EnsemblPlants" id="AT2G04090.1">
    <property type="protein sequence ID" value="AT2G04090.1"/>
    <property type="gene ID" value="AT2G04090"/>
</dbReference>
<dbReference type="GeneID" id="814945"/>
<dbReference type="Gramene" id="AT2G04090.1">
    <property type="protein sequence ID" value="AT2G04090.1"/>
    <property type="gene ID" value="AT2G04090"/>
</dbReference>
<dbReference type="KEGG" id="ath:AT2G04090"/>
<dbReference type="Araport" id="AT2G04090"/>
<dbReference type="TAIR" id="AT2G04090"/>
<dbReference type="eggNOG" id="KOG1347">
    <property type="taxonomic scope" value="Eukaryota"/>
</dbReference>
<dbReference type="HOGENOM" id="CLU_012893_1_0_1"/>
<dbReference type="InParanoid" id="Q9SIA1"/>
<dbReference type="OMA" id="NIGAWAN"/>
<dbReference type="PhylomeDB" id="Q9SIA1"/>
<dbReference type="PRO" id="PR:Q9SIA1"/>
<dbReference type="Proteomes" id="UP000006548">
    <property type="component" value="Chromosome 2"/>
</dbReference>
<dbReference type="ExpressionAtlas" id="Q9SIA1">
    <property type="expression patterns" value="baseline and differential"/>
</dbReference>
<dbReference type="GO" id="GO:0016020">
    <property type="term" value="C:membrane"/>
    <property type="evidence" value="ECO:0007669"/>
    <property type="project" value="UniProtKB-SubCell"/>
</dbReference>
<dbReference type="GO" id="GO:0015297">
    <property type="term" value="F:antiporter activity"/>
    <property type="evidence" value="ECO:0007669"/>
    <property type="project" value="InterPro"/>
</dbReference>
<dbReference type="GO" id="GO:0042910">
    <property type="term" value="F:xenobiotic transmembrane transporter activity"/>
    <property type="evidence" value="ECO:0007669"/>
    <property type="project" value="InterPro"/>
</dbReference>
<dbReference type="GO" id="GO:1990961">
    <property type="term" value="P:xenobiotic detoxification by transmembrane export across the plasma membrane"/>
    <property type="evidence" value="ECO:0007669"/>
    <property type="project" value="InterPro"/>
</dbReference>
<dbReference type="CDD" id="cd13132">
    <property type="entry name" value="MATE_eukaryotic"/>
    <property type="match status" value="1"/>
</dbReference>
<dbReference type="InterPro" id="IPR045069">
    <property type="entry name" value="MATE_euk"/>
</dbReference>
<dbReference type="InterPro" id="IPR002528">
    <property type="entry name" value="MATE_fam"/>
</dbReference>
<dbReference type="NCBIfam" id="TIGR00797">
    <property type="entry name" value="matE"/>
    <property type="match status" value="1"/>
</dbReference>
<dbReference type="PANTHER" id="PTHR11206">
    <property type="entry name" value="MULTIDRUG RESISTANCE PROTEIN"/>
    <property type="match status" value="1"/>
</dbReference>
<dbReference type="Pfam" id="PF01554">
    <property type="entry name" value="MatE"/>
    <property type="match status" value="2"/>
</dbReference>
<name>DTX5_ARATH</name>
<evidence type="ECO:0000255" key="1"/>
<evidence type="ECO:0000303" key="2">
    <source>
    </source>
</evidence>
<evidence type="ECO:0000305" key="3"/>
<evidence type="ECO:0000312" key="4">
    <source>
        <dbReference type="Araport" id="AT2G04090"/>
    </source>
</evidence>
<evidence type="ECO:0000312" key="5">
    <source>
        <dbReference type="EMBL" id="AEC05798.1"/>
    </source>
</evidence>
<proteinExistence type="inferred from homology"/>
<gene>
    <name evidence="2" type="primary">DTX5</name>
    <name evidence="4" type="ordered locus">At2g04090</name>
    <name evidence="5" type="ORF">F3L12.8</name>
</gene>